<proteinExistence type="inferred from homology"/>
<dbReference type="EMBL" id="BX842648">
    <property type="protein sequence ID" value="CAE78755.1"/>
    <property type="molecule type" value="Genomic_DNA"/>
</dbReference>
<dbReference type="SMR" id="Q6MPP2"/>
<dbReference type="STRING" id="264462.Bd0806"/>
<dbReference type="KEGG" id="bba:Bd0806"/>
<dbReference type="eggNOG" id="COG0218">
    <property type="taxonomic scope" value="Bacteria"/>
</dbReference>
<dbReference type="HOGENOM" id="CLU_033732_3_0_7"/>
<dbReference type="Proteomes" id="UP000008080">
    <property type="component" value="Chromosome"/>
</dbReference>
<dbReference type="GO" id="GO:0005829">
    <property type="term" value="C:cytosol"/>
    <property type="evidence" value="ECO:0007669"/>
    <property type="project" value="TreeGrafter"/>
</dbReference>
<dbReference type="GO" id="GO:0005525">
    <property type="term" value="F:GTP binding"/>
    <property type="evidence" value="ECO:0007669"/>
    <property type="project" value="UniProtKB-UniRule"/>
</dbReference>
<dbReference type="GO" id="GO:0046872">
    <property type="term" value="F:metal ion binding"/>
    <property type="evidence" value="ECO:0007669"/>
    <property type="project" value="UniProtKB-KW"/>
</dbReference>
<dbReference type="GO" id="GO:0000917">
    <property type="term" value="P:division septum assembly"/>
    <property type="evidence" value="ECO:0007669"/>
    <property type="project" value="UniProtKB-KW"/>
</dbReference>
<dbReference type="CDD" id="cd01876">
    <property type="entry name" value="YihA_EngB"/>
    <property type="match status" value="1"/>
</dbReference>
<dbReference type="Gene3D" id="3.40.50.300">
    <property type="entry name" value="P-loop containing nucleotide triphosphate hydrolases"/>
    <property type="match status" value="1"/>
</dbReference>
<dbReference type="HAMAP" id="MF_00321">
    <property type="entry name" value="GTPase_EngB"/>
    <property type="match status" value="1"/>
</dbReference>
<dbReference type="InterPro" id="IPR030393">
    <property type="entry name" value="G_ENGB_dom"/>
</dbReference>
<dbReference type="InterPro" id="IPR006073">
    <property type="entry name" value="GTP-bd"/>
</dbReference>
<dbReference type="InterPro" id="IPR019987">
    <property type="entry name" value="GTP-bd_ribosome_bio_YsxC"/>
</dbReference>
<dbReference type="InterPro" id="IPR027417">
    <property type="entry name" value="P-loop_NTPase"/>
</dbReference>
<dbReference type="InterPro" id="IPR005225">
    <property type="entry name" value="Small_GTP-bd"/>
</dbReference>
<dbReference type="NCBIfam" id="TIGR03598">
    <property type="entry name" value="GTPase_YsxC"/>
    <property type="match status" value="1"/>
</dbReference>
<dbReference type="NCBIfam" id="TIGR00231">
    <property type="entry name" value="small_GTP"/>
    <property type="match status" value="1"/>
</dbReference>
<dbReference type="PANTHER" id="PTHR11649:SF13">
    <property type="entry name" value="ENGB-TYPE G DOMAIN-CONTAINING PROTEIN"/>
    <property type="match status" value="1"/>
</dbReference>
<dbReference type="PANTHER" id="PTHR11649">
    <property type="entry name" value="MSS1/TRME-RELATED GTP-BINDING PROTEIN"/>
    <property type="match status" value="1"/>
</dbReference>
<dbReference type="Pfam" id="PF01926">
    <property type="entry name" value="MMR_HSR1"/>
    <property type="match status" value="1"/>
</dbReference>
<dbReference type="PRINTS" id="PR00326">
    <property type="entry name" value="GTP1OBG"/>
</dbReference>
<dbReference type="SUPFAM" id="SSF52540">
    <property type="entry name" value="P-loop containing nucleoside triphosphate hydrolases"/>
    <property type="match status" value="1"/>
</dbReference>
<dbReference type="PROSITE" id="PS51706">
    <property type="entry name" value="G_ENGB"/>
    <property type="match status" value="1"/>
</dbReference>
<keyword id="KW-0131">Cell cycle</keyword>
<keyword id="KW-0132">Cell division</keyword>
<keyword id="KW-0342">GTP-binding</keyword>
<keyword id="KW-0460">Magnesium</keyword>
<keyword id="KW-0479">Metal-binding</keyword>
<keyword id="KW-0547">Nucleotide-binding</keyword>
<keyword id="KW-1185">Reference proteome</keyword>
<keyword id="KW-0717">Septation</keyword>
<gene>
    <name evidence="1" type="primary">engB</name>
    <name type="ordered locus">Bd0806</name>
</gene>
<sequence length="200" mass="22528">MGGALIVLAMPKTIQFIKSAVLEKDFPVHKKAEVAIAGRSNAGKSSFINALTKNKIAKVSSTPGKTRLLNFFELDQSYVMVDMPGYGFAARSGDEMREWHRMIETYLMNREQLRGLLLVMDIRRSWTEDEELLKEFSERRGFPLAVVLTKADKMSRSQMLQAVAKVKKASGLSAVFGVSALKKEGQDAVEDYIYENWIKE</sequence>
<evidence type="ECO:0000255" key="1">
    <source>
        <dbReference type="HAMAP-Rule" id="MF_00321"/>
    </source>
</evidence>
<comment type="function">
    <text evidence="1">Necessary for normal cell division and for the maintenance of normal septation.</text>
</comment>
<comment type="cofactor">
    <cofactor evidence="1">
        <name>Mg(2+)</name>
        <dbReference type="ChEBI" id="CHEBI:18420"/>
    </cofactor>
</comment>
<comment type="similarity">
    <text evidence="1">Belongs to the TRAFAC class TrmE-Era-EngA-EngB-Septin-like GTPase superfamily. EngB GTPase family.</text>
</comment>
<name>ENGB_BDEBA</name>
<reference key="1">
    <citation type="journal article" date="2004" name="Science">
        <title>A predator unmasked: life cycle of Bdellovibrio bacteriovorus from a genomic perspective.</title>
        <authorList>
            <person name="Rendulic S."/>
            <person name="Jagtap P."/>
            <person name="Rosinus A."/>
            <person name="Eppinger M."/>
            <person name="Baar C."/>
            <person name="Lanz C."/>
            <person name="Keller H."/>
            <person name="Lambert C."/>
            <person name="Evans K.J."/>
            <person name="Goesmann A."/>
            <person name="Meyer F."/>
            <person name="Sockett R.E."/>
            <person name="Schuster S.C."/>
        </authorList>
    </citation>
    <scope>NUCLEOTIDE SEQUENCE [LARGE SCALE GENOMIC DNA]</scope>
    <source>
        <strain>ATCC 15356 / DSM 50701 / NCIMB 9529 / HD100</strain>
    </source>
</reference>
<protein>
    <recommendedName>
        <fullName evidence="1">Probable GTP-binding protein EngB</fullName>
    </recommendedName>
</protein>
<accession>Q6MPP2</accession>
<feature type="chain" id="PRO_0000266824" description="Probable GTP-binding protein EngB">
    <location>
        <begin position="1"/>
        <end position="200"/>
    </location>
</feature>
<feature type="domain" description="EngB-type G" evidence="1">
    <location>
        <begin position="30"/>
        <end position="199"/>
    </location>
</feature>
<feature type="binding site" evidence="1">
    <location>
        <begin position="38"/>
        <end position="45"/>
    </location>
    <ligand>
        <name>GTP</name>
        <dbReference type="ChEBI" id="CHEBI:37565"/>
    </ligand>
</feature>
<feature type="binding site" evidence="1">
    <location>
        <position position="45"/>
    </location>
    <ligand>
        <name>Mg(2+)</name>
        <dbReference type="ChEBI" id="CHEBI:18420"/>
    </ligand>
</feature>
<feature type="binding site" evidence="1">
    <location>
        <begin position="64"/>
        <end position="68"/>
    </location>
    <ligand>
        <name>GTP</name>
        <dbReference type="ChEBI" id="CHEBI:37565"/>
    </ligand>
</feature>
<feature type="binding site" evidence="1">
    <location>
        <position position="66"/>
    </location>
    <ligand>
        <name>Mg(2+)</name>
        <dbReference type="ChEBI" id="CHEBI:18420"/>
    </ligand>
</feature>
<feature type="binding site" evidence="1">
    <location>
        <begin position="82"/>
        <end position="85"/>
    </location>
    <ligand>
        <name>GTP</name>
        <dbReference type="ChEBI" id="CHEBI:37565"/>
    </ligand>
</feature>
<feature type="binding site" evidence="1">
    <location>
        <begin position="149"/>
        <end position="152"/>
    </location>
    <ligand>
        <name>GTP</name>
        <dbReference type="ChEBI" id="CHEBI:37565"/>
    </ligand>
</feature>
<feature type="binding site" evidence="1">
    <location>
        <begin position="178"/>
        <end position="180"/>
    </location>
    <ligand>
        <name>GTP</name>
        <dbReference type="ChEBI" id="CHEBI:37565"/>
    </ligand>
</feature>
<organism>
    <name type="scientific">Bdellovibrio bacteriovorus (strain ATCC 15356 / DSM 50701 / NCIMB 9529 / HD100)</name>
    <dbReference type="NCBI Taxonomy" id="264462"/>
    <lineage>
        <taxon>Bacteria</taxon>
        <taxon>Pseudomonadati</taxon>
        <taxon>Bdellovibrionota</taxon>
        <taxon>Bdellovibrionia</taxon>
        <taxon>Bdellovibrionales</taxon>
        <taxon>Pseudobdellovibrionaceae</taxon>
        <taxon>Bdellovibrio</taxon>
    </lineage>
</organism>